<keyword id="KW-0150">Chloroplast</keyword>
<keyword id="KW-0934">Plastid</keyword>
<keyword id="KW-0687">Ribonucleoprotein</keyword>
<keyword id="KW-0689">Ribosomal protein</keyword>
<accession>P41551</accession>
<geneLocation type="chloroplast"/>
<protein>
    <recommendedName>
        <fullName evidence="2">Large ribosomal subunit protein bL27c-2</fullName>
    </recommendedName>
    <alternativeName>
        <fullName evidence="2">50S ribosomal protein L27, chloroplastic</fullName>
    </alternativeName>
</protein>
<gene>
    <name evidence="1" type="primary">rpl27</name>
</gene>
<comment type="subcellular location">
    <subcellularLocation>
        <location evidence="2">Plastid</location>
        <location evidence="2">Chloroplast</location>
    </subcellularLocation>
</comment>
<comment type="similarity">
    <text evidence="2">Belongs to the bacterial ribosomal protein bL27 family.</text>
</comment>
<sequence length="47" mass="5081">STKNGRDSNPKYLGVKTCHAQFVTAGSILVRQRGSKFHHGQNVGVAK</sequence>
<proteinExistence type="inferred from homology"/>
<reference key="1">
    <citation type="journal article" date="1994" name="Plant Mol. Biol.">
        <title>The gene for ribosomal protein L27 is located on the plastid rather than the nuclear genome of the chlorophyll c-containing alga Pleurochrysis carterae.</title>
        <authorList>
            <person name="Fujiwara S."/>
            <person name="Kawachi M."/>
            <person name="Inouye I."/>
            <person name="Someya J."/>
        </authorList>
    </citation>
    <scope>NUCLEOTIDE SEQUENCE [GENOMIC DNA]</scope>
    <source>
        <strain>RK-1</strain>
    </source>
</reference>
<dbReference type="EMBL" id="D26098">
    <property type="protein sequence ID" value="BAA05094.1"/>
    <property type="molecule type" value="Genomic_DNA"/>
</dbReference>
<dbReference type="PIR" id="T14374">
    <property type="entry name" value="T14374"/>
</dbReference>
<dbReference type="SMR" id="P41551"/>
<dbReference type="GO" id="GO:0009507">
    <property type="term" value="C:chloroplast"/>
    <property type="evidence" value="ECO:0007669"/>
    <property type="project" value="UniProtKB-SubCell"/>
</dbReference>
<dbReference type="GO" id="GO:0022625">
    <property type="term" value="C:cytosolic large ribosomal subunit"/>
    <property type="evidence" value="ECO:0007669"/>
    <property type="project" value="TreeGrafter"/>
</dbReference>
<dbReference type="GO" id="GO:0003735">
    <property type="term" value="F:structural constituent of ribosome"/>
    <property type="evidence" value="ECO:0007669"/>
    <property type="project" value="InterPro"/>
</dbReference>
<dbReference type="GO" id="GO:0006412">
    <property type="term" value="P:translation"/>
    <property type="evidence" value="ECO:0007669"/>
    <property type="project" value="InterPro"/>
</dbReference>
<dbReference type="Gene3D" id="2.40.50.100">
    <property type="match status" value="1"/>
</dbReference>
<dbReference type="InterPro" id="IPR001684">
    <property type="entry name" value="Ribosomal_bL27"/>
</dbReference>
<dbReference type="InterPro" id="IPR018261">
    <property type="entry name" value="Ribosomal_bL27_CS"/>
</dbReference>
<dbReference type="PANTHER" id="PTHR15893:SF0">
    <property type="entry name" value="LARGE RIBOSOMAL SUBUNIT PROTEIN BL27M"/>
    <property type="match status" value="1"/>
</dbReference>
<dbReference type="PANTHER" id="PTHR15893">
    <property type="entry name" value="RIBOSOMAL PROTEIN L27"/>
    <property type="match status" value="1"/>
</dbReference>
<dbReference type="Pfam" id="PF01016">
    <property type="entry name" value="Ribosomal_L27"/>
    <property type="match status" value="1"/>
</dbReference>
<dbReference type="SUPFAM" id="SSF110324">
    <property type="entry name" value="Ribosomal L27 protein-like"/>
    <property type="match status" value="1"/>
</dbReference>
<dbReference type="PROSITE" id="PS00831">
    <property type="entry name" value="RIBOSOMAL_L27"/>
    <property type="match status" value="1"/>
</dbReference>
<organism>
    <name type="scientific">Cyanidium caldarium</name>
    <name type="common">Red alga</name>
    <dbReference type="NCBI Taxonomy" id="2771"/>
    <lineage>
        <taxon>Eukaryota</taxon>
        <taxon>Rhodophyta</taxon>
        <taxon>Bangiophyceae</taxon>
        <taxon>Cyanidiales</taxon>
        <taxon>Cyanidiaceae</taxon>
        <taxon>Cyanidium</taxon>
    </lineage>
</organism>
<name>RK27B_CYACA</name>
<feature type="chain" id="PRO_0000181220" description="Large ribosomal subunit protein bL27c-2">
    <location>
        <begin position="1" status="less than"/>
        <end position="47" status="greater than"/>
    </location>
</feature>
<feature type="non-terminal residue">
    <location>
        <position position="1"/>
    </location>
</feature>
<feature type="non-terminal residue">
    <location>
        <position position="47"/>
    </location>
</feature>
<evidence type="ECO:0000303" key="1">
    <source>
    </source>
</evidence>
<evidence type="ECO:0000305" key="2"/>